<name>GLRX3_HUMAN</name>
<dbReference type="EMBL" id="AF118649">
    <property type="protein sequence ID" value="AAF28841.1"/>
    <property type="molecule type" value="mRNA"/>
</dbReference>
<dbReference type="EMBL" id="AF118652">
    <property type="protein sequence ID" value="AAF28844.1"/>
    <property type="molecule type" value="mRNA"/>
</dbReference>
<dbReference type="EMBL" id="AJ010841">
    <property type="protein sequence ID" value="CAA09375.1"/>
    <property type="molecule type" value="mRNA"/>
</dbReference>
<dbReference type="EMBL" id="AK022131">
    <property type="protein sequence ID" value="BAG51067.1"/>
    <property type="molecule type" value="mRNA"/>
</dbReference>
<dbReference type="EMBL" id="AK021926">
    <property type="protein sequence ID" value="BAG51059.1"/>
    <property type="molecule type" value="mRNA"/>
</dbReference>
<dbReference type="EMBL" id="AL139123">
    <property type="status" value="NOT_ANNOTATED_CDS"/>
    <property type="molecule type" value="Genomic_DNA"/>
</dbReference>
<dbReference type="EMBL" id="CH471066">
    <property type="protein sequence ID" value="EAW49152.1"/>
    <property type="molecule type" value="Genomic_DNA"/>
</dbReference>
<dbReference type="EMBL" id="CH471066">
    <property type="protein sequence ID" value="EAW49154.1"/>
    <property type="molecule type" value="Genomic_DNA"/>
</dbReference>
<dbReference type="EMBL" id="CH471066">
    <property type="protein sequence ID" value="EAW49155.1"/>
    <property type="molecule type" value="Genomic_DNA"/>
</dbReference>
<dbReference type="EMBL" id="BC005289">
    <property type="protein sequence ID" value="AAH05289.1"/>
    <property type="molecule type" value="mRNA"/>
</dbReference>
<dbReference type="EMBL" id="BC014372">
    <property type="protein sequence ID" value="AAH14372.2"/>
    <property type="molecule type" value="mRNA"/>
</dbReference>
<dbReference type="CCDS" id="CCDS7661.1"/>
<dbReference type="RefSeq" id="NP_001186797.1">
    <property type="nucleotide sequence ID" value="NM_001199868.2"/>
</dbReference>
<dbReference type="RefSeq" id="NP_006532.2">
    <property type="nucleotide sequence ID" value="NM_006541.5"/>
</dbReference>
<dbReference type="PDB" id="2DIY">
    <property type="method" value="NMR"/>
    <property type="chains" value="A=1-117"/>
</dbReference>
<dbReference type="PDB" id="2WZ9">
    <property type="method" value="X-ray"/>
    <property type="resolution" value="1.55 A"/>
    <property type="chains" value="A=1-125"/>
</dbReference>
<dbReference type="PDB" id="2YAN">
    <property type="method" value="X-ray"/>
    <property type="resolution" value="1.90 A"/>
    <property type="chains" value="A/B=232-334"/>
</dbReference>
<dbReference type="PDB" id="3ZYW">
    <property type="method" value="X-ray"/>
    <property type="resolution" value="1.84 A"/>
    <property type="chains" value="A/B=130-232"/>
</dbReference>
<dbReference type="PDBsum" id="2DIY"/>
<dbReference type="PDBsum" id="2WZ9"/>
<dbReference type="PDBsum" id="2YAN"/>
<dbReference type="PDBsum" id="3ZYW"/>
<dbReference type="BMRB" id="O76003"/>
<dbReference type="SMR" id="O76003"/>
<dbReference type="BioGRID" id="115793">
    <property type="interactions" value="226"/>
</dbReference>
<dbReference type="ComplexPortal" id="CPX-6861">
    <property type="entry name" value="BOLA2-GLRX3 iron-sulfur cluster assembly complex"/>
</dbReference>
<dbReference type="CORUM" id="O76003"/>
<dbReference type="DIP" id="DIP-31306N"/>
<dbReference type="FunCoup" id="O76003">
    <property type="interactions" value="4152"/>
</dbReference>
<dbReference type="IntAct" id="O76003">
    <property type="interactions" value="152"/>
</dbReference>
<dbReference type="MINT" id="O76003"/>
<dbReference type="STRING" id="9606.ENSP00000357633"/>
<dbReference type="GlyGen" id="O76003">
    <property type="glycosylation" value="1 site, 1 O-linked glycan (1 site)"/>
</dbReference>
<dbReference type="iPTMnet" id="O76003"/>
<dbReference type="MetOSite" id="O76003"/>
<dbReference type="PhosphoSitePlus" id="O76003"/>
<dbReference type="SwissPalm" id="O76003"/>
<dbReference type="BioMuta" id="GLRX3"/>
<dbReference type="REPRODUCTION-2DPAGE" id="IPI00008552"/>
<dbReference type="CPTAC" id="CPTAC-206"/>
<dbReference type="CPTAC" id="CPTAC-207"/>
<dbReference type="jPOST" id="O76003"/>
<dbReference type="MassIVE" id="O76003"/>
<dbReference type="PaxDb" id="9606-ENSP00000357633"/>
<dbReference type="PeptideAtlas" id="O76003"/>
<dbReference type="ProteomicsDB" id="50341"/>
<dbReference type="Pumba" id="O76003"/>
<dbReference type="Antibodypedia" id="32521">
    <property type="antibodies" value="383 antibodies from 31 providers"/>
</dbReference>
<dbReference type="DNASU" id="10539"/>
<dbReference type="Ensembl" id="ENST00000331244.10">
    <property type="protein sequence ID" value="ENSP00000330836.5"/>
    <property type="gene ID" value="ENSG00000108010.12"/>
</dbReference>
<dbReference type="Ensembl" id="ENST00000368644.5">
    <property type="protein sequence ID" value="ENSP00000357633.1"/>
    <property type="gene ID" value="ENSG00000108010.12"/>
</dbReference>
<dbReference type="Ensembl" id="ENST00000481034.1">
    <property type="protein sequence ID" value="ENSP00000435445.1"/>
    <property type="gene ID" value="ENSG00000108010.12"/>
</dbReference>
<dbReference type="GeneID" id="10539"/>
<dbReference type="KEGG" id="hsa:10539"/>
<dbReference type="MANE-Select" id="ENST00000331244.10">
    <property type="protein sequence ID" value="ENSP00000330836.5"/>
    <property type="RefSeq nucleotide sequence ID" value="NM_006541.5"/>
    <property type="RefSeq protein sequence ID" value="NP_006532.2"/>
</dbReference>
<dbReference type="UCSC" id="uc001lkm.3">
    <property type="organism name" value="human"/>
</dbReference>
<dbReference type="AGR" id="HGNC:15987"/>
<dbReference type="CTD" id="10539"/>
<dbReference type="DisGeNET" id="10539"/>
<dbReference type="GeneCards" id="GLRX3"/>
<dbReference type="HGNC" id="HGNC:15987">
    <property type="gene designation" value="GLRX3"/>
</dbReference>
<dbReference type="HPA" id="ENSG00000108010">
    <property type="expression patterns" value="Low tissue specificity"/>
</dbReference>
<dbReference type="MIM" id="612754">
    <property type="type" value="gene"/>
</dbReference>
<dbReference type="neXtProt" id="NX_O76003"/>
<dbReference type="OpenTargets" id="ENSG00000108010"/>
<dbReference type="PharmGKB" id="PA162389829"/>
<dbReference type="VEuPathDB" id="HostDB:ENSG00000108010"/>
<dbReference type="eggNOG" id="KOG0911">
    <property type="taxonomic scope" value="Eukaryota"/>
</dbReference>
<dbReference type="GeneTree" id="ENSGT00550000075030"/>
<dbReference type="HOGENOM" id="CLU_026126_12_2_1"/>
<dbReference type="InParanoid" id="O76003"/>
<dbReference type="OMA" id="WAEPCKT"/>
<dbReference type="OrthoDB" id="415696at2759"/>
<dbReference type="PAN-GO" id="O76003">
    <property type="GO annotations" value="3 GO annotations based on evolutionary models"/>
</dbReference>
<dbReference type="PhylomeDB" id="O76003"/>
<dbReference type="TreeFam" id="TF314151"/>
<dbReference type="PathwayCommons" id="O76003"/>
<dbReference type="Reactome" id="R-HSA-917937">
    <property type="pathway name" value="Iron uptake and transport"/>
</dbReference>
<dbReference type="SignaLink" id="O76003"/>
<dbReference type="BioGRID-ORCS" id="10539">
    <property type="hits" value="235 hits in 1164 CRISPR screens"/>
</dbReference>
<dbReference type="CD-CODE" id="91857CE7">
    <property type="entry name" value="Nucleolus"/>
</dbReference>
<dbReference type="CD-CODE" id="DEE660B4">
    <property type="entry name" value="Stress granule"/>
</dbReference>
<dbReference type="ChiTaRS" id="GLRX3">
    <property type="organism name" value="human"/>
</dbReference>
<dbReference type="EvolutionaryTrace" id="O76003"/>
<dbReference type="GeneWiki" id="GLRX3"/>
<dbReference type="GenomeRNAi" id="10539"/>
<dbReference type="Pharos" id="O76003">
    <property type="development level" value="Tbio"/>
</dbReference>
<dbReference type="PRO" id="PR:O76003"/>
<dbReference type="Proteomes" id="UP000005640">
    <property type="component" value="Chromosome 10"/>
</dbReference>
<dbReference type="RNAct" id="O76003">
    <property type="molecule type" value="protein"/>
</dbReference>
<dbReference type="Bgee" id="ENSG00000108010">
    <property type="expression patterns" value="Expressed in buccal mucosa cell and 202 other cell types or tissues"/>
</dbReference>
<dbReference type="ExpressionAtlas" id="O76003">
    <property type="expression patterns" value="baseline and differential"/>
</dbReference>
<dbReference type="GO" id="GO:0005938">
    <property type="term" value="C:cell cortex"/>
    <property type="evidence" value="ECO:0007669"/>
    <property type="project" value="UniProtKB-SubCell"/>
</dbReference>
<dbReference type="GO" id="GO:0005737">
    <property type="term" value="C:cytoplasm"/>
    <property type="evidence" value="ECO:0000303"/>
    <property type="project" value="ComplexPortal"/>
</dbReference>
<dbReference type="GO" id="GO:0005829">
    <property type="term" value="C:cytosol"/>
    <property type="evidence" value="ECO:0000318"/>
    <property type="project" value="GO_Central"/>
</dbReference>
<dbReference type="GO" id="GO:0030425">
    <property type="term" value="C:dendrite"/>
    <property type="evidence" value="ECO:0007669"/>
    <property type="project" value="Ensembl"/>
</dbReference>
<dbReference type="GO" id="GO:1990229">
    <property type="term" value="C:iron-sulfur cluster assembly complex"/>
    <property type="evidence" value="ECO:0000353"/>
    <property type="project" value="ComplexPortal"/>
</dbReference>
<dbReference type="GO" id="GO:0005634">
    <property type="term" value="C:nucleus"/>
    <property type="evidence" value="ECO:0000318"/>
    <property type="project" value="GO_Central"/>
</dbReference>
<dbReference type="GO" id="GO:0030018">
    <property type="term" value="C:Z disc"/>
    <property type="evidence" value="ECO:0007669"/>
    <property type="project" value="UniProtKB-SubCell"/>
</dbReference>
<dbReference type="GO" id="GO:0042802">
    <property type="term" value="F:identical protein binding"/>
    <property type="evidence" value="ECO:0000353"/>
    <property type="project" value="IntAct"/>
</dbReference>
<dbReference type="GO" id="GO:0051536">
    <property type="term" value="F:iron-sulfur cluster binding"/>
    <property type="evidence" value="ECO:0007669"/>
    <property type="project" value="UniProtKB-KW"/>
</dbReference>
<dbReference type="GO" id="GO:0046872">
    <property type="term" value="F:metal ion binding"/>
    <property type="evidence" value="ECO:0007669"/>
    <property type="project" value="UniProtKB-KW"/>
</dbReference>
<dbReference type="GO" id="GO:0005080">
    <property type="term" value="F:protein kinase C binding"/>
    <property type="evidence" value="ECO:0007669"/>
    <property type="project" value="Ensembl"/>
</dbReference>
<dbReference type="GO" id="GO:0003723">
    <property type="term" value="F:RNA binding"/>
    <property type="evidence" value="ECO:0007005"/>
    <property type="project" value="UniProtKB"/>
</dbReference>
<dbReference type="GO" id="GO:0044571">
    <property type="term" value="P:[2Fe-2S] cluster assembly"/>
    <property type="evidence" value="ECO:0000314"/>
    <property type="project" value="UniProtKB"/>
</dbReference>
<dbReference type="GO" id="GO:0045454">
    <property type="term" value="P:cell redox homeostasis"/>
    <property type="evidence" value="ECO:0000314"/>
    <property type="project" value="ComplexPortal"/>
</dbReference>
<dbReference type="GO" id="GO:0006879">
    <property type="term" value="P:intracellular iron ion homeostasis"/>
    <property type="evidence" value="ECO:0000314"/>
    <property type="project" value="ComplexPortal"/>
</dbReference>
<dbReference type="GO" id="GO:0016226">
    <property type="term" value="P:iron-sulfur cluster assembly"/>
    <property type="evidence" value="ECO:0000314"/>
    <property type="project" value="ComplexPortal"/>
</dbReference>
<dbReference type="GO" id="GO:0010614">
    <property type="term" value="P:negative regulation of cardiac muscle hypertrophy"/>
    <property type="evidence" value="ECO:0000250"/>
    <property type="project" value="UniProtKB"/>
</dbReference>
<dbReference type="GO" id="GO:0002026">
    <property type="term" value="P:regulation of the force of heart contraction"/>
    <property type="evidence" value="ECO:0000250"/>
    <property type="project" value="UniProtKB"/>
</dbReference>
<dbReference type="CDD" id="cd03028">
    <property type="entry name" value="GRX_PICOT_like"/>
    <property type="match status" value="2"/>
</dbReference>
<dbReference type="CDD" id="cd02984">
    <property type="entry name" value="TRX_PICOT"/>
    <property type="match status" value="1"/>
</dbReference>
<dbReference type="FunFam" id="3.40.30.10:FF:000090">
    <property type="entry name" value="Glutaredoxin-3"/>
    <property type="match status" value="1"/>
</dbReference>
<dbReference type="FunFam" id="3.40.30.10:FF:000165">
    <property type="entry name" value="glutaredoxin-3 isoform X1"/>
    <property type="match status" value="1"/>
</dbReference>
<dbReference type="FunFam" id="3.40.30.10:FF:000012">
    <property type="entry name" value="Monothiol glutaredoxin"/>
    <property type="match status" value="1"/>
</dbReference>
<dbReference type="Gene3D" id="3.40.30.10">
    <property type="entry name" value="Glutaredoxin"/>
    <property type="match status" value="3"/>
</dbReference>
<dbReference type="InterPro" id="IPR002109">
    <property type="entry name" value="Glutaredoxin"/>
</dbReference>
<dbReference type="InterPro" id="IPR033658">
    <property type="entry name" value="GRX_PICOT-like"/>
</dbReference>
<dbReference type="InterPro" id="IPR004480">
    <property type="entry name" value="Monothiol_GRX-rel"/>
</dbReference>
<dbReference type="InterPro" id="IPR036249">
    <property type="entry name" value="Thioredoxin-like_sf"/>
</dbReference>
<dbReference type="InterPro" id="IPR013766">
    <property type="entry name" value="Thioredoxin_domain"/>
</dbReference>
<dbReference type="NCBIfam" id="TIGR00365">
    <property type="entry name" value="Grx4 family monothiol glutaredoxin"/>
    <property type="match status" value="1"/>
</dbReference>
<dbReference type="PANTHER" id="PTHR10293">
    <property type="entry name" value="GLUTAREDOXIN FAMILY MEMBER"/>
    <property type="match status" value="1"/>
</dbReference>
<dbReference type="PANTHER" id="PTHR10293:SF73">
    <property type="entry name" value="GLUTAREDOXIN-3"/>
    <property type="match status" value="1"/>
</dbReference>
<dbReference type="Pfam" id="PF00462">
    <property type="entry name" value="Glutaredoxin"/>
    <property type="match status" value="2"/>
</dbReference>
<dbReference type="Pfam" id="PF00085">
    <property type="entry name" value="Thioredoxin"/>
    <property type="match status" value="1"/>
</dbReference>
<dbReference type="SUPFAM" id="SSF52833">
    <property type="entry name" value="Thioredoxin-like"/>
    <property type="match status" value="3"/>
</dbReference>
<dbReference type="PROSITE" id="PS51354">
    <property type="entry name" value="GLUTAREDOXIN_2"/>
    <property type="match status" value="2"/>
</dbReference>
<dbReference type="PROSITE" id="PS51352">
    <property type="entry name" value="THIOREDOXIN_2"/>
    <property type="match status" value="1"/>
</dbReference>
<keyword id="KW-0002">3D-structure</keyword>
<keyword id="KW-0007">Acetylation</keyword>
<keyword id="KW-0963">Cytoplasm</keyword>
<keyword id="KW-0903">Direct protein sequencing</keyword>
<keyword id="KW-0408">Iron</keyword>
<keyword id="KW-0411">Iron-sulfur</keyword>
<keyword id="KW-0479">Metal-binding</keyword>
<keyword id="KW-0597">Phosphoprotein</keyword>
<keyword id="KW-1267">Proteomics identification</keyword>
<keyword id="KW-1185">Reference proteome</keyword>
<keyword id="KW-0677">Repeat</keyword>
<organism>
    <name type="scientific">Homo sapiens</name>
    <name type="common">Human</name>
    <dbReference type="NCBI Taxonomy" id="9606"/>
    <lineage>
        <taxon>Eukaryota</taxon>
        <taxon>Metazoa</taxon>
        <taxon>Chordata</taxon>
        <taxon>Craniata</taxon>
        <taxon>Vertebrata</taxon>
        <taxon>Euteleostomi</taxon>
        <taxon>Mammalia</taxon>
        <taxon>Eutheria</taxon>
        <taxon>Euarchontoglires</taxon>
        <taxon>Primates</taxon>
        <taxon>Haplorrhini</taxon>
        <taxon>Catarrhini</taxon>
        <taxon>Hominidae</taxon>
        <taxon>Homo</taxon>
    </lineage>
</organism>
<sequence length="335" mass="37432">MAAGAAEAAVAAVEEVGSAGQFEELLRLKAKSLLVVHFWAPWAPQCAQMNEVMAELAKELPQVSFVKLEAEGVPEVSEKYEISSVPTFLFFKNSQKIDRLDGAHAPELTKKVQRHASSGSFLPSANEHLKEDLNLRLKKLTHAAPCMLFMKGTPQEPRCGFSKQMVEILHKHNIQFSSFDIFSDEEVRQGLKAYSSWPTYPQLYVSGELIGGLDIIKELEASEELDTICPKAPKLEERLKVLTNKASVMLFMKGNKQEAKCGFSKQILEILNSTGVEYETFDILEDEEVRQGLKAYSNWPTYPQLYVKGELVGGLDIVKELKENGELLPILRGEN</sequence>
<gene>
    <name type="primary">GLRX3</name>
    <name evidence="12" type="synonym">PICOT</name>
    <name type="synonym">TXNL2</name>
    <name type="ORF">HUSSY-22</name>
</gene>
<reference key="1">
    <citation type="journal article" date="2000" name="J. Biol. Chem.">
        <title>Inhibition of the c-Jun N-terminal kinase/AP-1 and NF-kappaB pathways by PICOT, a novel protein kinase C-interacting protein with a thioredoxin homology domain.</title>
        <authorList>
            <person name="Witte S."/>
            <person name="Villalba M."/>
            <person name="Bi K."/>
            <person name="Liu Y."/>
            <person name="Isakov N."/>
            <person name="Altman A."/>
        </authorList>
    </citation>
    <scope>NUCLEOTIDE SEQUENCE [MRNA]</scope>
    <scope>SUBCELLULAR LOCATION</scope>
    <scope>INTERACTION WITH PRKCQ</scope>
    <scope>VARIANTS HIS-21 AND SER-123</scope>
    <source>
        <tissue>Liver</tissue>
        <tissue>Spleen</tissue>
        <tissue>T-cell lymphoma</tissue>
    </source>
</reference>
<reference key="2">
    <citation type="journal article" date="2001" name="Yeast">
        <title>Characterization of 16 novel human genes showing high similarity to yeast sequences.</title>
        <authorList>
            <person name="Stanchi F."/>
            <person name="Bertocco E."/>
            <person name="Toppo S."/>
            <person name="Dioguardi R."/>
            <person name="Simionati B."/>
            <person name="Cannata N."/>
            <person name="Zimbello R."/>
            <person name="Lanfranchi G."/>
            <person name="Valle G."/>
        </authorList>
    </citation>
    <scope>NUCLEOTIDE SEQUENCE [MRNA]</scope>
    <source>
        <tissue>Melanocyte</tissue>
    </source>
</reference>
<reference key="3">
    <citation type="journal article" date="2004" name="Nat. Genet.">
        <title>Complete sequencing and characterization of 21,243 full-length human cDNAs.</title>
        <authorList>
            <person name="Ota T."/>
            <person name="Suzuki Y."/>
            <person name="Nishikawa T."/>
            <person name="Otsuki T."/>
            <person name="Sugiyama T."/>
            <person name="Irie R."/>
            <person name="Wakamatsu A."/>
            <person name="Hayashi K."/>
            <person name="Sato H."/>
            <person name="Nagai K."/>
            <person name="Kimura K."/>
            <person name="Makita H."/>
            <person name="Sekine M."/>
            <person name="Obayashi M."/>
            <person name="Nishi T."/>
            <person name="Shibahara T."/>
            <person name="Tanaka T."/>
            <person name="Ishii S."/>
            <person name="Yamamoto J."/>
            <person name="Saito K."/>
            <person name="Kawai Y."/>
            <person name="Isono Y."/>
            <person name="Nakamura Y."/>
            <person name="Nagahari K."/>
            <person name="Murakami K."/>
            <person name="Yasuda T."/>
            <person name="Iwayanagi T."/>
            <person name="Wagatsuma M."/>
            <person name="Shiratori A."/>
            <person name="Sudo H."/>
            <person name="Hosoiri T."/>
            <person name="Kaku Y."/>
            <person name="Kodaira H."/>
            <person name="Kondo H."/>
            <person name="Sugawara M."/>
            <person name="Takahashi M."/>
            <person name="Kanda K."/>
            <person name="Yokoi T."/>
            <person name="Furuya T."/>
            <person name="Kikkawa E."/>
            <person name="Omura Y."/>
            <person name="Abe K."/>
            <person name="Kamihara K."/>
            <person name="Katsuta N."/>
            <person name="Sato K."/>
            <person name="Tanikawa M."/>
            <person name="Yamazaki M."/>
            <person name="Ninomiya K."/>
            <person name="Ishibashi T."/>
            <person name="Yamashita H."/>
            <person name="Murakawa K."/>
            <person name="Fujimori K."/>
            <person name="Tanai H."/>
            <person name="Kimata M."/>
            <person name="Watanabe M."/>
            <person name="Hiraoka S."/>
            <person name="Chiba Y."/>
            <person name="Ishida S."/>
            <person name="Ono Y."/>
            <person name="Takiguchi S."/>
            <person name="Watanabe S."/>
            <person name="Yosida M."/>
            <person name="Hotuta T."/>
            <person name="Kusano J."/>
            <person name="Kanehori K."/>
            <person name="Takahashi-Fujii A."/>
            <person name="Hara H."/>
            <person name="Tanase T.-O."/>
            <person name="Nomura Y."/>
            <person name="Togiya S."/>
            <person name="Komai F."/>
            <person name="Hara R."/>
            <person name="Takeuchi K."/>
            <person name="Arita M."/>
            <person name="Imose N."/>
            <person name="Musashino K."/>
            <person name="Yuuki H."/>
            <person name="Oshima A."/>
            <person name="Sasaki N."/>
            <person name="Aotsuka S."/>
            <person name="Yoshikawa Y."/>
            <person name="Matsunawa H."/>
            <person name="Ichihara T."/>
            <person name="Shiohata N."/>
            <person name="Sano S."/>
            <person name="Moriya S."/>
            <person name="Momiyama H."/>
            <person name="Satoh N."/>
            <person name="Takami S."/>
            <person name="Terashima Y."/>
            <person name="Suzuki O."/>
            <person name="Nakagawa S."/>
            <person name="Senoh A."/>
            <person name="Mizoguchi H."/>
            <person name="Goto Y."/>
            <person name="Shimizu F."/>
            <person name="Wakebe H."/>
            <person name="Hishigaki H."/>
            <person name="Watanabe T."/>
            <person name="Sugiyama A."/>
            <person name="Takemoto M."/>
            <person name="Kawakami B."/>
            <person name="Yamazaki M."/>
            <person name="Watanabe K."/>
            <person name="Kumagai A."/>
            <person name="Itakura S."/>
            <person name="Fukuzumi Y."/>
            <person name="Fujimori Y."/>
            <person name="Komiyama M."/>
            <person name="Tashiro H."/>
            <person name="Tanigami A."/>
            <person name="Fujiwara T."/>
            <person name="Ono T."/>
            <person name="Yamada K."/>
            <person name="Fujii Y."/>
            <person name="Ozaki K."/>
            <person name="Hirao M."/>
            <person name="Ohmori Y."/>
            <person name="Kawabata A."/>
            <person name="Hikiji T."/>
            <person name="Kobatake N."/>
            <person name="Inagaki H."/>
            <person name="Ikema Y."/>
            <person name="Okamoto S."/>
            <person name="Okitani R."/>
            <person name="Kawakami T."/>
            <person name="Noguchi S."/>
            <person name="Itoh T."/>
            <person name="Shigeta K."/>
            <person name="Senba T."/>
            <person name="Matsumura K."/>
            <person name="Nakajima Y."/>
            <person name="Mizuno T."/>
            <person name="Morinaga M."/>
            <person name="Sasaki M."/>
            <person name="Togashi T."/>
            <person name="Oyama M."/>
            <person name="Hata H."/>
            <person name="Watanabe M."/>
            <person name="Komatsu T."/>
            <person name="Mizushima-Sugano J."/>
            <person name="Satoh T."/>
            <person name="Shirai Y."/>
            <person name="Takahashi Y."/>
            <person name="Nakagawa K."/>
            <person name="Okumura K."/>
            <person name="Nagase T."/>
            <person name="Nomura N."/>
            <person name="Kikuchi H."/>
            <person name="Masuho Y."/>
            <person name="Yamashita R."/>
            <person name="Nakai K."/>
            <person name="Yada T."/>
            <person name="Nakamura Y."/>
            <person name="Ohara O."/>
            <person name="Isogai T."/>
            <person name="Sugano S."/>
        </authorList>
    </citation>
    <scope>NUCLEOTIDE SEQUENCE [LARGE SCALE MRNA]</scope>
    <scope>VARIANTS HIS-21 AND SER-123</scope>
</reference>
<reference key="4">
    <citation type="journal article" date="2004" name="Nature">
        <title>The DNA sequence and comparative analysis of human chromosome 10.</title>
        <authorList>
            <person name="Deloukas P."/>
            <person name="Earthrowl M.E."/>
            <person name="Grafham D.V."/>
            <person name="Rubenfield M."/>
            <person name="French L."/>
            <person name="Steward C.A."/>
            <person name="Sims S.K."/>
            <person name="Jones M.C."/>
            <person name="Searle S."/>
            <person name="Scott C."/>
            <person name="Howe K."/>
            <person name="Hunt S.E."/>
            <person name="Andrews T.D."/>
            <person name="Gilbert J.G.R."/>
            <person name="Swarbreck D."/>
            <person name="Ashurst J.L."/>
            <person name="Taylor A."/>
            <person name="Battles J."/>
            <person name="Bird C.P."/>
            <person name="Ainscough R."/>
            <person name="Almeida J.P."/>
            <person name="Ashwell R.I.S."/>
            <person name="Ambrose K.D."/>
            <person name="Babbage A.K."/>
            <person name="Bagguley C.L."/>
            <person name="Bailey J."/>
            <person name="Banerjee R."/>
            <person name="Bates K."/>
            <person name="Beasley H."/>
            <person name="Bray-Allen S."/>
            <person name="Brown A.J."/>
            <person name="Brown J.Y."/>
            <person name="Burford D.C."/>
            <person name="Burrill W."/>
            <person name="Burton J."/>
            <person name="Cahill P."/>
            <person name="Camire D."/>
            <person name="Carter N.P."/>
            <person name="Chapman J.C."/>
            <person name="Clark S.Y."/>
            <person name="Clarke G."/>
            <person name="Clee C.M."/>
            <person name="Clegg S."/>
            <person name="Corby N."/>
            <person name="Coulson A."/>
            <person name="Dhami P."/>
            <person name="Dutta I."/>
            <person name="Dunn M."/>
            <person name="Faulkner L."/>
            <person name="Frankish A."/>
            <person name="Frankland J.A."/>
            <person name="Garner P."/>
            <person name="Garnett J."/>
            <person name="Gribble S."/>
            <person name="Griffiths C."/>
            <person name="Grocock R."/>
            <person name="Gustafson E."/>
            <person name="Hammond S."/>
            <person name="Harley J.L."/>
            <person name="Hart E."/>
            <person name="Heath P.D."/>
            <person name="Ho T.P."/>
            <person name="Hopkins B."/>
            <person name="Horne J."/>
            <person name="Howden P.J."/>
            <person name="Huckle E."/>
            <person name="Hynds C."/>
            <person name="Johnson C."/>
            <person name="Johnson D."/>
            <person name="Kana A."/>
            <person name="Kay M."/>
            <person name="Kimberley A.M."/>
            <person name="Kershaw J.K."/>
            <person name="Kokkinaki M."/>
            <person name="Laird G.K."/>
            <person name="Lawlor S."/>
            <person name="Lee H.M."/>
            <person name="Leongamornlert D.A."/>
            <person name="Laird G."/>
            <person name="Lloyd C."/>
            <person name="Lloyd D.M."/>
            <person name="Loveland J."/>
            <person name="Lovell J."/>
            <person name="McLaren S."/>
            <person name="McLay K.E."/>
            <person name="McMurray A."/>
            <person name="Mashreghi-Mohammadi M."/>
            <person name="Matthews L."/>
            <person name="Milne S."/>
            <person name="Nickerson T."/>
            <person name="Nguyen M."/>
            <person name="Overton-Larty E."/>
            <person name="Palmer S.A."/>
            <person name="Pearce A.V."/>
            <person name="Peck A.I."/>
            <person name="Pelan S."/>
            <person name="Phillimore B."/>
            <person name="Porter K."/>
            <person name="Rice C.M."/>
            <person name="Rogosin A."/>
            <person name="Ross M.T."/>
            <person name="Sarafidou T."/>
            <person name="Sehra H.K."/>
            <person name="Shownkeen R."/>
            <person name="Skuce C.D."/>
            <person name="Smith M."/>
            <person name="Standring L."/>
            <person name="Sycamore N."/>
            <person name="Tester J."/>
            <person name="Thorpe A."/>
            <person name="Torcasso W."/>
            <person name="Tracey A."/>
            <person name="Tromans A."/>
            <person name="Tsolas J."/>
            <person name="Wall M."/>
            <person name="Walsh J."/>
            <person name="Wang H."/>
            <person name="Weinstock K."/>
            <person name="West A.P."/>
            <person name="Willey D.L."/>
            <person name="Whitehead S.L."/>
            <person name="Wilming L."/>
            <person name="Wray P.W."/>
            <person name="Young L."/>
            <person name="Chen Y."/>
            <person name="Lovering R.C."/>
            <person name="Moschonas N.K."/>
            <person name="Siebert R."/>
            <person name="Fechtel K."/>
            <person name="Bentley D."/>
            <person name="Durbin R.M."/>
            <person name="Hubbard T."/>
            <person name="Doucette-Stamm L."/>
            <person name="Beck S."/>
            <person name="Smith D.R."/>
            <person name="Rogers J."/>
        </authorList>
    </citation>
    <scope>NUCLEOTIDE SEQUENCE [LARGE SCALE GENOMIC DNA]</scope>
</reference>
<reference key="5">
    <citation type="submission" date="2005-09" db="EMBL/GenBank/DDBJ databases">
        <authorList>
            <person name="Mural R.J."/>
            <person name="Istrail S."/>
            <person name="Sutton G.G."/>
            <person name="Florea L."/>
            <person name="Halpern A.L."/>
            <person name="Mobarry C.M."/>
            <person name="Lippert R."/>
            <person name="Walenz B."/>
            <person name="Shatkay H."/>
            <person name="Dew I."/>
            <person name="Miller J.R."/>
            <person name="Flanigan M.J."/>
            <person name="Edwards N.J."/>
            <person name="Bolanos R."/>
            <person name="Fasulo D."/>
            <person name="Halldorsson B.V."/>
            <person name="Hannenhalli S."/>
            <person name="Turner R."/>
            <person name="Yooseph S."/>
            <person name="Lu F."/>
            <person name="Nusskern D.R."/>
            <person name="Shue B.C."/>
            <person name="Zheng X.H."/>
            <person name="Zhong F."/>
            <person name="Delcher A.L."/>
            <person name="Huson D.H."/>
            <person name="Kravitz S.A."/>
            <person name="Mouchard L."/>
            <person name="Reinert K."/>
            <person name="Remington K.A."/>
            <person name="Clark A.G."/>
            <person name="Waterman M.S."/>
            <person name="Eichler E.E."/>
            <person name="Adams M.D."/>
            <person name="Hunkapiller M.W."/>
            <person name="Myers E.W."/>
            <person name="Venter J.C."/>
        </authorList>
    </citation>
    <scope>NUCLEOTIDE SEQUENCE [LARGE SCALE GENOMIC DNA]</scope>
</reference>
<reference key="6">
    <citation type="journal article" date="2004" name="Genome Res.">
        <title>The status, quality, and expansion of the NIH full-length cDNA project: the Mammalian Gene Collection (MGC).</title>
        <authorList>
            <consortium name="The MGC Project Team"/>
        </authorList>
    </citation>
    <scope>NUCLEOTIDE SEQUENCE [LARGE SCALE MRNA]</scope>
    <scope>VARIANTS HIS-21 AND SER-123</scope>
    <source>
        <tissue>Bone marrow</tissue>
        <tissue>Urinary bladder</tissue>
    </source>
</reference>
<reference key="7">
    <citation type="submission" date="2008-12" db="UniProtKB">
        <authorList>
            <person name="Lubec G."/>
            <person name="Chen W.-Q."/>
            <person name="Sun Y."/>
        </authorList>
    </citation>
    <scope>PROTEIN SEQUENCE OF 59-79; 115-130; 218-231; 246-253; 309-319 AND 323-332</scope>
    <source>
        <tissue>Fetal brain cortex</tissue>
    </source>
</reference>
<reference key="8">
    <citation type="journal article" date="2010" name="Biochem. Biophys. Res. Commun.">
        <title>Characterization of the human monothiol glutaredoxin 3 (PICOT) as iron-sulfur protein.</title>
        <authorList>
            <person name="Haunhorst P."/>
            <person name="Berndt C."/>
            <person name="Eitner S."/>
            <person name="Godoy J.R."/>
            <person name="Lillig C.H."/>
        </authorList>
    </citation>
    <scope>SUBUNIT</scope>
    <scope>MUTAGENESIS OF CYS-159 AND CYS-261</scope>
    <scope>METAL</scope>
</reference>
<reference key="9">
    <citation type="journal article" date="2011" name="BMC Syst. Biol.">
        <title>Initial characterization of the human central proteome.</title>
        <authorList>
            <person name="Burkard T.R."/>
            <person name="Planyavsky M."/>
            <person name="Kaupe I."/>
            <person name="Breitwieser F.P."/>
            <person name="Buerckstuemmer T."/>
            <person name="Bennett K.L."/>
            <person name="Superti-Furga G."/>
            <person name="Colinge J."/>
        </authorList>
    </citation>
    <scope>IDENTIFICATION BY MASS SPECTROMETRY [LARGE SCALE ANALYSIS]</scope>
</reference>
<reference key="10">
    <citation type="journal article" date="2012" name="Biochemistry">
        <title>Human glutaredoxin 3 forms [2Fe-2S]-bridged complexes with human BolA2.</title>
        <authorList>
            <person name="Li H."/>
            <person name="Mapolelo D.T."/>
            <person name="Randeniya S."/>
            <person name="Johnson M.K."/>
            <person name="Outten C.E."/>
        </authorList>
    </citation>
    <scope>INTERACTION WITH BOLA2</scope>
</reference>
<reference key="11">
    <citation type="journal article" date="2012" name="Mol. Cell. Proteomics">
        <title>Comparative large-scale characterisation of plant vs. mammal proteins reveals similar and idiosyncratic N-alpha acetylation features.</title>
        <authorList>
            <person name="Bienvenut W.V."/>
            <person name="Sumpton D."/>
            <person name="Martinez A."/>
            <person name="Lilla S."/>
            <person name="Espagne C."/>
            <person name="Meinnel T."/>
            <person name="Giglione C."/>
        </authorList>
    </citation>
    <scope>ACETYLATION [LARGE SCALE ANALYSIS] AT ALA-2</scope>
    <scope>CLEAVAGE OF INITIATOR METHIONINE [LARGE SCALE ANALYSIS]</scope>
    <scope>IDENTIFICATION BY MASS SPECTROMETRY [LARGE SCALE ANALYSIS]</scope>
</reference>
<reference key="12">
    <citation type="journal article" date="2012" name="Proc. Natl. Acad. Sci. U.S.A.">
        <title>N-terminal acetylome analyses and functional insights of the N-terminal acetyltransferase NatB.</title>
        <authorList>
            <person name="Van Damme P."/>
            <person name="Lasa M."/>
            <person name="Polevoda B."/>
            <person name="Gazquez C."/>
            <person name="Elosegui-Artola A."/>
            <person name="Kim D.S."/>
            <person name="De Juan-Pardo E."/>
            <person name="Demeyer K."/>
            <person name="Hole K."/>
            <person name="Larrea E."/>
            <person name="Timmerman E."/>
            <person name="Prieto J."/>
            <person name="Arnesen T."/>
            <person name="Sherman F."/>
            <person name="Gevaert K."/>
            <person name="Aldabe R."/>
        </authorList>
    </citation>
    <scope>ACETYLATION [LARGE SCALE ANALYSIS] AT ALA-2</scope>
    <scope>CLEAVAGE OF INITIATOR METHIONINE [LARGE SCALE ANALYSIS]</scope>
    <scope>IDENTIFICATION BY MASS SPECTROMETRY [LARGE SCALE ANALYSIS]</scope>
</reference>
<reference key="13">
    <citation type="journal article" date="2013" name="J. Proteome Res.">
        <title>Toward a comprehensive characterization of a human cancer cell phosphoproteome.</title>
        <authorList>
            <person name="Zhou H."/>
            <person name="Di Palma S."/>
            <person name="Preisinger C."/>
            <person name="Peng M."/>
            <person name="Polat A.N."/>
            <person name="Heck A.J."/>
            <person name="Mohammed S."/>
        </authorList>
    </citation>
    <scope>PHOSPHORYLATION [LARGE SCALE ANALYSIS] AT SER-117 AND SER-120</scope>
    <scope>IDENTIFICATION BY MASS SPECTROMETRY [LARGE SCALE ANALYSIS]</scope>
    <source>
        <tissue>Erythroleukemia</tissue>
    </source>
</reference>
<reference key="14">
    <citation type="journal article" date="2013" name="Mol. Biol. Cell">
        <title>Crucial function of vertebrate glutaredoxin 3 (PICOT) in iron homeostasis and hemoglobin maturation.</title>
        <authorList>
            <person name="Haunhorst P."/>
            <person name="Hanschmann E.M."/>
            <person name="Brautigam L."/>
            <person name="Stehling O."/>
            <person name="Hoffmann B."/>
            <person name="Muhlenhoff U."/>
            <person name="Lill R."/>
            <person name="Berndt C."/>
            <person name="Lillig C.H."/>
        </authorList>
    </citation>
    <scope>FUNCTION</scope>
</reference>
<reference key="15">
    <citation type="journal article" date="2014" name="J. Proteomics">
        <title>An enzyme assisted RP-RPLC approach for in-depth analysis of human liver phosphoproteome.</title>
        <authorList>
            <person name="Bian Y."/>
            <person name="Song C."/>
            <person name="Cheng K."/>
            <person name="Dong M."/>
            <person name="Wang F."/>
            <person name="Huang J."/>
            <person name="Sun D."/>
            <person name="Wang L."/>
            <person name="Ye M."/>
            <person name="Zou H."/>
        </authorList>
    </citation>
    <scope>IDENTIFICATION BY MASS SPECTROMETRY [LARGE SCALE ANALYSIS]</scope>
    <source>
        <tissue>Liver</tissue>
    </source>
</reference>
<reference key="16">
    <citation type="journal article" date="2015" name="J. Am. Chem. Soc.">
        <title>Elucidating the molecular function of human BOLA2 in GRX3-dependent anamorsin maturation pathway.</title>
        <authorList>
            <person name="Banci L."/>
            <person name="Camponeschi F."/>
            <person name="Ciofi-Baffoni S."/>
            <person name="Muzzioli R."/>
        </authorList>
    </citation>
    <scope>FUNCTION</scope>
    <scope>INTERACTION WITH BOLA2</scope>
</reference>
<reference key="17">
    <citation type="journal article" date="2015" name="Proteomics">
        <title>N-terminome analysis of the human mitochondrial proteome.</title>
        <authorList>
            <person name="Vaca Jacome A.S."/>
            <person name="Rabilloud T."/>
            <person name="Schaeffer-Reiss C."/>
            <person name="Rompais M."/>
            <person name="Ayoub D."/>
            <person name="Lane L."/>
            <person name="Bairoch A."/>
            <person name="Van Dorsselaer A."/>
            <person name="Carapito C."/>
        </authorList>
    </citation>
    <scope>ACETYLATION [LARGE SCALE ANALYSIS] AT ALA-2</scope>
    <scope>CLEAVAGE OF INITIATOR METHIONINE [LARGE SCALE ANALYSIS]</scope>
    <scope>IDENTIFICATION BY MASS SPECTROMETRY [LARGE SCALE ANALYSIS]</scope>
</reference>
<reference key="18">
    <citation type="journal article" date="2016" name="J. Biol. Chem.">
        <title>A glutaredoxin-BolA complex serves as an iron-sulfur cluster chaperone for the cytosolic cluster assembly machinery.</title>
        <authorList>
            <person name="Frey A.G."/>
            <person name="Palenchar D.J."/>
            <person name="Wildemann J.D."/>
            <person name="Philpott C.C."/>
        </authorList>
    </citation>
    <scope>FUNCTION</scope>
    <scope>SUBCELLULAR LOCATION</scope>
    <scope>SUBUNIT</scope>
    <scope>INTERACTION WITH BOLA2</scope>
    <scope>MUTAGENESIS OF CYS-159; 159-TRP-PRO-160; CYS-261 AND 299-TRP-PRO-300</scope>
</reference>
<reference key="19">
    <citation type="submission" date="2007-04" db="PDB data bank">
        <title>The solution structure of the thioredoxin domain of human thioredoxin-like protein 2.</title>
        <authorList>
            <consortium name="RIKEN structural genomics initiative (RSGI)"/>
        </authorList>
    </citation>
    <scope>STRUCTURE BY NMR OF 1-119</scope>
</reference>
<protein>
    <recommendedName>
        <fullName>Glutaredoxin-3</fullName>
    </recommendedName>
    <alternativeName>
        <fullName evidence="12">PKC-interacting cousin of thioredoxin</fullName>
        <shortName evidence="12">PICOT</shortName>
    </alternativeName>
    <alternativeName>
        <fullName>PKC-theta-interacting protein</fullName>
        <shortName>PKCq-interacting protein</shortName>
    </alternativeName>
    <alternativeName>
        <fullName>Thioredoxin-like protein 2</fullName>
    </alternativeName>
</protein>
<proteinExistence type="evidence at protein level"/>
<feature type="initiator methionine" description="Removed" evidence="17 18 20">
    <location>
        <position position="1"/>
    </location>
</feature>
<feature type="chain" id="PRO_0000120019" description="Glutaredoxin-3">
    <location>
        <begin position="2"/>
        <end position="335"/>
    </location>
</feature>
<feature type="domain" description="Thioredoxin" evidence="3">
    <location>
        <begin position="2"/>
        <end position="117"/>
    </location>
</feature>
<feature type="domain" description="Glutaredoxin 1" evidence="2">
    <location>
        <begin position="144"/>
        <end position="236"/>
    </location>
</feature>
<feature type="domain" description="Glutaredoxin 2" evidence="2">
    <location>
        <begin position="237"/>
        <end position="335"/>
    </location>
</feature>
<feature type="binding site" evidence="14 16">
    <location>
        <position position="159"/>
    </location>
    <ligand>
        <name>[2Fe-2S] cluster</name>
        <dbReference type="ChEBI" id="CHEBI:190135"/>
        <note>ligand shared between dimeric partners</note>
    </ligand>
</feature>
<feature type="binding site" evidence="14 16">
    <location>
        <position position="261"/>
    </location>
    <ligand>
        <name>[2Fe-2S] cluster</name>
        <dbReference type="ChEBI" id="CHEBI:190135"/>
        <note>ligand shared between dimeric partners</note>
    </ligand>
</feature>
<feature type="modified residue" description="N-acetylalanine" evidence="17 18 20">
    <location>
        <position position="2"/>
    </location>
</feature>
<feature type="modified residue" description="Phosphoserine" evidence="19">
    <location>
        <position position="117"/>
    </location>
</feature>
<feature type="modified residue" description="Phosphoserine" evidence="19">
    <location>
        <position position="120"/>
    </location>
</feature>
<feature type="sequence variant" id="VAR_016875" description="In dbSNP:rs13991." evidence="4 5 6">
    <original>Q</original>
    <variation>H</variation>
    <location>
        <position position="21"/>
    </location>
</feature>
<feature type="sequence variant" id="VAR_016876" description="In dbSNP:rs2274217." evidence="4 5 6">
    <original>P</original>
    <variation>S</variation>
    <location>
        <position position="123"/>
    </location>
</feature>
<feature type="mutagenesis site" description="Loss of 2Fe-2S-binding; when associated with S-261. Loss of 2Fe-2S-binding and interaction with BOLA2; when associated with 197-D-A-198." evidence="7 11">
    <original>C</original>
    <variation>S</variation>
    <location>
        <position position="159"/>
    </location>
</feature>
<feature type="mutagenesis site" description="Loss of 2Fe-2S-binding and interaction with BOLA2; when associated with S-159." evidence="11">
    <original>WP</original>
    <variation>DA</variation>
    <location>
        <begin position="197"/>
        <end position="198"/>
    </location>
</feature>
<feature type="mutagenesis site" description="Loss of 2Fe-2S-binding; when associated with S-159. Loss of 2Fe-2S-binding and interaction with BOLA2; when associated with 299-D-A-300." evidence="7 11">
    <original>C</original>
    <variation>S</variation>
    <location>
        <position position="261"/>
    </location>
</feature>
<feature type="mutagenesis site" description="Loss of 2Fe-2S-binding and interaction with BOLA2; when associated with S-261." evidence="11">
    <original>WP</original>
    <variation>DA</variation>
    <location>
        <begin position="299"/>
        <end position="300"/>
    </location>
</feature>
<feature type="sequence conflict" description="In Ref. 2; CAA09375." evidence="13" ref="2">
    <original>A</original>
    <variation>E</variation>
    <location>
        <position position="2"/>
    </location>
</feature>
<feature type="sequence conflict" description="In Ref. 3; BAG51067." evidence="13" ref="3">
    <original>K</original>
    <variation>R</variation>
    <location>
        <position position="67"/>
    </location>
</feature>
<feature type="sequence conflict" description="In Ref. 3; BAG51059." evidence="13" ref="3">
    <original>I</original>
    <variation>T</variation>
    <location>
        <position position="210"/>
    </location>
</feature>
<feature type="strand" evidence="21">
    <location>
        <begin position="13"/>
        <end position="16"/>
    </location>
</feature>
<feature type="helix" evidence="21">
    <location>
        <begin position="19"/>
        <end position="28"/>
    </location>
</feature>
<feature type="turn" evidence="21">
    <location>
        <begin position="29"/>
        <end position="31"/>
    </location>
</feature>
<feature type="strand" evidence="21">
    <location>
        <begin position="34"/>
        <end position="39"/>
    </location>
</feature>
<feature type="helix" evidence="21">
    <location>
        <begin position="44"/>
        <end position="59"/>
    </location>
</feature>
<feature type="strand" evidence="21">
    <location>
        <begin position="63"/>
        <end position="69"/>
    </location>
</feature>
<feature type="turn" evidence="21">
    <location>
        <begin position="70"/>
        <end position="72"/>
    </location>
</feature>
<feature type="helix" evidence="21">
    <location>
        <begin position="74"/>
        <end position="79"/>
    </location>
</feature>
<feature type="strand" evidence="21">
    <location>
        <begin position="84"/>
        <end position="92"/>
    </location>
</feature>
<feature type="strand" evidence="21">
    <location>
        <begin position="95"/>
        <end position="103"/>
    </location>
</feature>
<feature type="helix" evidence="21">
    <location>
        <begin position="105"/>
        <end position="115"/>
    </location>
</feature>
<feature type="helix" evidence="23">
    <location>
        <begin position="133"/>
        <end position="141"/>
    </location>
</feature>
<feature type="strand" evidence="23">
    <location>
        <begin position="143"/>
        <end position="152"/>
    </location>
</feature>
<feature type="strand" evidence="23">
    <location>
        <begin position="154"/>
        <end position="159"/>
    </location>
</feature>
<feature type="helix" evidence="23">
    <location>
        <begin position="160"/>
        <end position="171"/>
    </location>
</feature>
<feature type="strand" evidence="23">
    <location>
        <begin position="177"/>
        <end position="180"/>
    </location>
</feature>
<feature type="helix" evidence="23">
    <location>
        <begin position="181"/>
        <end position="183"/>
    </location>
</feature>
<feature type="helix" evidence="23">
    <location>
        <begin position="185"/>
        <end position="195"/>
    </location>
</feature>
<feature type="strand" evidence="23">
    <location>
        <begin position="202"/>
        <end position="205"/>
    </location>
</feature>
<feature type="strand" evidence="23">
    <location>
        <begin position="208"/>
        <end position="211"/>
    </location>
</feature>
<feature type="helix" evidence="23">
    <location>
        <begin position="213"/>
        <end position="221"/>
    </location>
</feature>
<feature type="helix" evidence="23">
    <location>
        <begin position="225"/>
        <end position="228"/>
    </location>
</feature>
<feature type="helix" evidence="22">
    <location>
        <begin position="233"/>
        <end position="243"/>
    </location>
</feature>
<feature type="strand" evidence="22">
    <location>
        <begin position="245"/>
        <end position="254"/>
    </location>
</feature>
<feature type="strand" evidence="22">
    <location>
        <begin position="256"/>
        <end position="259"/>
    </location>
</feature>
<feature type="helix" evidence="22">
    <location>
        <begin position="263"/>
        <end position="273"/>
    </location>
</feature>
<feature type="strand" evidence="22">
    <location>
        <begin position="279"/>
        <end position="282"/>
    </location>
</feature>
<feature type="helix" evidence="22">
    <location>
        <begin position="283"/>
        <end position="285"/>
    </location>
</feature>
<feature type="helix" evidence="22">
    <location>
        <begin position="287"/>
        <end position="297"/>
    </location>
</feature>
<feature type="strand" evidence="22">
    <location>
        <begin position="304"/>
        <end position="307"/>
    </location>
</feature>
<feature type="strand" evidence="22">
    <location>
        <begin position="310"/>
        <end position="313"/>
    </location>
</feature>
<feature type="helix" evidence="22">
    <location>
        <begin position="315"/>
        <end position="323"/>
    </location>
</feature>
<feature type="helix" evidence="22">
    <location>
        <begin position="327"/>
        <end position="331"/>
    </location>
</feature>
<evidence type="ECO:0000250" key="1">
    <source>
        <dbReference type="UniProtKB" id="Q9CQM9"/>
    </source>
</evidence>
<evidence type="ECO:0000255" key="2">
    <source>
        <dbReference type="PROSITE-ProRule" id="PRU00686"/>
    </source>
</evidence>
<evidence type="ECO:0000255" key="3">
    <source>
        <dbReference type="PROSITE-ProRule" id="PRU00691"/>
    </source>
</evidence>
<evidence type="ECO:0000269" key="4">
    <source>
    </source>
</evidence>
<evidence type="ECO:0000269" key="5">
    <source>
    </source>
</evidence>
<evidence type="ECO:0000269" key="6">
    <source>
    </source>
</evidence>
<evidence type="ECO:0000269" key="7">
    <source>
    </source>
</evidence>
<evidence type="ECO:0000269" key="8">
    <source>
    </source>
</evidence>
<evidence type="ECO:0000269" key="9">
    <source>
    </source>
</evidence>
<evidence type="ECO:0000269" key="10">
    <source>
    </source>
</evidence>
<evidence type="ECO:0000269" key="11">
    <source>
    </source>
</evidence>
<evidence type="ECO:0000303" key="12">
    <source>
    </source>
</evidence>
<evidence type="ECO:0000305" key="13"/>
<evidence type="ECO:0000305" key="14">
    <source>
    </source>
</evidence>
<evidence type="ECO:0000305" key="15">
    <source>
    </source>
</evidence>
<evidence type="ECO:0000305" key="16">
    <source>
    </source>
</evidence>
<evidence type="ECO:0007744" key="17">
    <source>
    </source>
</evidence>
<evidence type="ECO:0007744" key="18">
    <source>
    </source>
</evidence>
<evidence type="ECO:0007744" key="19">
    <source>
    </source>
</evidence>
<evidence type="ECO:0007744" key="20">
    <source>
    </source>
</evidence>
<evidence type="ECO:0007829" key="21">
    <source>
        <dbReference type="PDB" id="2WZ9"/>
    </source>
</evidence>
<evidence type="ECO:0007829" key="22">
    <source>
        <dbReference type="PDB" id="2YAN"/>
    </source>
</evidence>
<evidence type="ECO:0007829" key="23">
    <source>
        <dbReference type="PDB" id="3ZYW"/>
    </source>
</evidence>
<accession>O76003</accession>
<accession>B3KMP7</accession>
<accession>B3KMQ5</accession>
<accession>D3DRG2</accession>
<accession>Q5JV01</accession>
<accession>Q96CE0</accession>
<accession>Q9P1B0</accession>
<accession>Q9P1B1</accession>
<comment type="function">
    <text evidence="1 9 10 11">Together with BOLA2, acts as a cytosolic iron-sulfur (Fe-S) cluster assembly factor that facilitates [2Fe-2S] cluster insertion into a subset of cytosolic proteins (PubMed:26613676, PubMed:27519415). Acts as a critical negative regulator of cardiac hypertrophy and a positive inotropic regulator (By similarity). Required for hemoglobin maturation (PubMed:23615448). Does not possess any thyoredoxin activity since it lacks the conserved motif that is essential for catalytic activity.</text>
</comment>
<comment type="subunit">
    <text evidence="1 4 8 10 11">Homodimer; the homodimer is independent of 2Fe-2S clusters (PubMed:27519415). Heterotrimer; forms a heterotrimeric complex composed by two BOLA2 molecules and one GLRX3 molecule; linked by [2Fe-2S] clusters (PubMed:22309771, PubMed:26613676, PubMed:27519415). Interacts (via N-terminus) with PRKCQ/PKC-theta (PubMed:10636891). Interacts (via C-terminus) with CSRP3 (By similarity). Interacts with CSRP2 (By similarity).</text>
</comment>
<comment type="interaction">
    <interactant intactId="EBI-374781">
        <id>O76003</id>
    </interactant>
    <interactant intactId="EBI-10221726">
        <id>P82987</id>
        <label>ADAMTSL3</label>
    </interactant>
    <organismsDiffer>false</organismsDiffer>
    <experiments>3</experiments>
</comment>
<comment type="interaction">
    <interactant intactId="EBI-374781">
        <id>O76003</id>
    </interactant>
    <interactant intactId="EBI-6658697">
        <id>Q96Q83</id>
        <label>ALKBH3</label>
    </interactant>
    <organismsDiffer>false</organismsDiffer>
    <experiments>3</experiments>
</comment>
<comment type="interaction">
    <interactant intactId="EBI-374781">
        <id>O76003</id>
    </interactant>
    <interactant intactId="EBI-1049556">
        <id>Q9Y3E2</id>
        <label>BOLA1</label>
    </interactant>
    <organismsDiffer>false</organismsDiffer>
    <experiments>16</experiments>
</comment>
<comment type="interaction">
    <interactant intactId="EBI-374781">
        <id>O76003</id>
    </interactant>
    <interactant intactId="EBI-12006120">
        <id>A0A087WZT3</id>
        <label>BOLA2-SMG1P6</label>
    </interactant>
    <organismsDiffer>false</organismsDiffer>
    <experiments>3</experiments>
</comment>
<comment type="interaction">
    <interactant intactId="EBI-374781">
        <id>O76003</id>
    </interactant>
    <interactant intactId="EBI-1642537">
        <id>Q9H3K6</id>
        <label>BOLA2B</label>
    </interactant>
    <organismsDiffer>false</organismsDiffer>
    <experiments>4</experiments>
</comment>
<comment type="interaction">
    <interactant intactId="EBI-374781">
        <id>O76003</id>
    </interactant>
    <interactant intactId="EBI-12086950">
        <id>Q53S33</id>
        <label>BOLA3</label>
    </interactant>
    <organismsDiffer>false</organismsDiffer>
    <experiments>5</experiments>
</comment>
<comment type="interaction">
    <interactant intactId="EBI-374781">
        <id>O76003</id>
    </interactant>
    <interactant intactId="EBI-12259996">
        <id>Q16790</id>
        <label>CA9</label>
    </interactant>
    <organismsDiffer>false</organismsDiffer>
    <experiments>9</experiments>
</comment>
<comment type="interaction">
    <interactant intactId="EBI-374781">
        <id>O76003</id>
    </interactant>
    <interactant intactId="EBI-744027">
        <id>Q13191</id>
        <label>CBLB</label>
    </interactant>
    <organismsDiffer>false</organismsDiffer>
    <experiments>3</experiments>
</comment>
<comment type="interaction">
    <interactant intactId="EBI-374781">
        <id>O76003</id>
    </interactant>
    <interactant intactId="EBI-11983537">
        <id>Q86Y33-5</id>
        <label>CDC20B</label>
    </interactant>
    <organismsDiffer>false</organismsDiffer>
    <experiments>3</experiments>
</comment>
<comment type="interaction">
    <interactant intactId="EBI-374781">
        <id>O76003</id>
    </interactant>
    <interactant intactId="EBI-12261896">
        <id>Q5T4B2</id>
        <label>CERCAM</label>
    </interactant>
    <organismsDiffer>false</organismsDiffer>
    <experiments>3</experiments>
</comment>
<comment type="interaction">
    <interactant intactId="EBI-374781">
        <id>O76003</id>
    </interactant>
    <interactant intactId="EBI-723153">
        <id>Q9UFW8</id>
        <label>CGGBP1</label>
    </interactant>
    <organismsDiffer>false</organismsDiffer>
    <experiments>3</experiments>
</comment>
<comment type="interaction">
    <interactant intactId="EBI-374781">
        <id>O76003</id>
    </interactant>
    <interactant intactId="EBI-750511">
        <id>Q6FI81</id>
        <label>CIAPIN1</label>
    </interactant>
    <organismsDiffer>false</organismsDiffer>
    <experiments>24</experiments>
</comment>
<comment type="interaction">
    <interactant intactId="EBI-374781">
        <id>O76003</id>
    </interactant>
    <interactant intactId="EBI-16172762">
        <id>Q6FI81-1</id>
        <label>CIAPIN1</label>
    </interactant>
    <organismsDiffer>false</organismsDiffer>
    <experiments>2</experiments>
</comment>
<comment type="interaction">
    <interactant intactId="EBI-374781">
        <id>O76003</id>
    </interactant>
    <interactant intactId="EBI-747133">
        <id>P27658</id>
        <label>COL8A1</label>
    </interactant>
    <organismsDiffer>false</organismsDiffer>
    <experiments>3</experiments>
</comment>
<comment type="interaction">
    <interactant intactId="EBI-374781">
        <id>O76003</id>
    </interactant>
    <interactant intactId="EBI-8638992">
        <id>Q9NWS6</id>
        <label>FAM118A</label>
    </interactant>
    <organismsDiffer>false</organismsDiffer>
    <experiments>3</experiments>
</comment>
<comment type="interaction">
    <interactant intactId="EBI-374781">
        <id>O76003</id>
    </interactant>
    <interactant intactId="EBI-10172181">
        <id>Q53SE7</id>
        <label>FLJ13057</label>
    </interactant>
    <organismsDiffer>false</organismsDiffer>
    <experiments>3</experiments>
</comment>
<comment type="interaction">
    <interactant intactId="EBI-374781">
        <id>O76003</id>
    </interactant>
    <interactant intactId="EBI-374781">
        <id>O76003</id>
        <label>GLRX3</label>
    </interactant>
    <organismsDiffer>false</organismsDiffer>
    <experiments>3</experiments>
</comment>
<comment type="interaction">
    <interactant intactId="EBI-374781">
        <id>O76003</id>
    </interactant>
    <interactant intactId="EBI-11427343">
        <id>Q9P2W3</id>
        <label>GNG13</label>
    </interactant>
    <organismsDiffer>false</organismsDiffer>
    <experiments>3</experiments>
</comment>
<comment type="interaction">
    <interactant intactId="EBI-374781">
        <id>O76003</id>
    </interactant>
    <interactant intactId="EBI-747754">
        <id>P28799</id>
        <label>GRN</label>
    </interactant>
    <organismsDiffer>false</organismsDiffer>
    <experiments>9</experiments>
</comment>
<comment type="interaction">
    <interactant intactId="EBI-374781">
        <id>O76003</id>
    </interactant>
    <interactant intactId="EBI-22734368">
        <id>Q9BQS7-3</id>
        <label>HEPH</label>
    </interactant>
    <organismsDiffer>false</organismsDiffer>
    <experiments>3</experiments>
</comment>
<comment type="interaction">
    <interactant intactId="EBI-374781">
        <id>O76003</id>
    </interactant>
    <interactant intactId="EBI-3918847">
        <id>Q9H2F3</id>
        <label>HSD3B7</label>
    </interactant>
    <organismsDiffer>false</organismsDiffer>
    <experiments>3</experiments>
</comment>
<comment type="interaction">
    <interactant intactId="EBI-374781">
        <id>O76003</id>
    </interactant>
    <interactant intactId="EBI-745305">
        <id>Q13422</id>
        <label>IKZF1</label>
    </interactant>
    <organismsDiffer>false</organismsDiffer>
    <experiments>3</experiments>
</comment>
<comment type="interaction">
    <interactant intactId="EBI-374781">
        <id>O76003</id>
    </interactant>
    <interactant intactId="EBI-1031632">
        <id>P22301</id>
        <label>IL10</label>
    </interactant>
    <organismsDiffer>false</organismsDiffer>
    <experiments>3</experiments>
</comment>
<comment type="interaction">
    <interactant intactId="EBI-374781">
        <id>O76003</id>
    </interactant>
    <interactant intactId="EBI-12100506">
        <id>P78412</id>
        <label>IRX6</label>
    </interactant>
    <organismsDiffer>false</organismsDiffer>
    <experiments>5</experiments>
</comment>
<comment type="interaction">
    <interactant intactId="EBI-374781">
        <id>O76003</id>
    </interactant>
    <interactant intactId="EBI-12214879">
        <id>Q8NEP7</id>
        <label>KLHDC9</label>
    </interactant>
    <organismsDiffer>false</organismsDiffer>
    <experiments>5</experiments>
</comment>
<comment type="interaction">
    <interactant intactId="EBI-374781">
        <id>O76003</id>
    </interactant>
    <interactant intactId="EBI-10981970">
        <id>Q5T749</id>
        <label>KPRP</label>
    </interactant>
    <organismsDiffer>false</organismsDiffer>
    <experiments>3</experiments>
</comment>
<comment type="interaction">
    <interactant intactId="EBI-374781">
        <id>O76003</id>
    </interactant>
    <interactant intactId="EBI-948001">
        <id>Q15323</id>
        <label>KRT31</label>
    </interactant>
    <organismsDiffer>false</organismsDiffer>
    <experiments>3</experiments>
</comment>
<comment type="interaction">
    <interactant intactId="EBI-374781">
        <id>O76003</id>
    </interactant>
    <interactant intactId="EBI-1047263">
        <id>O76015</id>
        <label>KRT38</label>
    </interactant>
    <organismsDiffer>false</organismsDiffer>
    <experiments>3</experiments>
</comment>
<comment type="interaction">
    <interactant intactId="EBI-374781">
        <id>O76003</id>
    </interactant>
    <interactant intactId="EBI-10217483">
        <id>P60412</id>
        <label>KRTAP10-11</label>
    </interactant>
    <organismsDiffer>false</organismsDiffer>
    <experiments>4</experiments>
</comment>
<comment type="interaction">
    <interactant intactId="EBI-374781">
        <id>O76003</id>
    </interactant>
    <interactant intactId="EBI-10172150">
        <id>P60370</id>
        <label>KRTAP10-5</label>
    </interactant>
    <organismsDiffer>false</organismsDiffer>
    <experiments>6</experiments>
</comment>
<comment type="interaction">
    <interactant intactId="EBI-374781">
        <id>O76003</id>
    </interactant>
    <interactant intactId="EBI-10171774">
        <id>P60410</id>
        <label>KRTAP10-8</label>
    </interactant>
    <organismsDiffer>false</organismsDiffer>
    <experiments>8</experiments>
</comment>
<comment type="interaction">
    <interactant intactId="EBI-374781">
        <id>O76003</id>
    </interactant>
    <interactant intactId="EBI-10172052">
        <id>P60411</id>
        <label>KRTAP10-9</label>
    </interactant>
    <organismsDiffer>false</organismsDiffer>
    <experiments>8</experiments>
</comment>
<comment type="interaction">
    <interactant intactId="EBI-374781">
        <id>O76003</id>
    </interactant>
    <interactant intactId="EBI-11953334">
        <id>P60328</id>
        <label>KRTAP12-3</label>
    </interactant>
    <organismsDiffer>false</organismsDiffer>
    <experiments>3</experiments>
</comment>
<comment type="interaction">
    <interactant intactId="EBI-374781">
        <id>O76003</id>
    </interactant>
    <interactant intactId="EBI-10302392">
        <id>Q9BYQ6</id>
        <label>KRTAP4-11</label>
    </interactant>
    <organismsDiffer>false</organismsDiffer>
    <experiments>8</experiments>
</comment>
<comment type="interaction">
    <interactant intactId="EBI-374781">
        <id>O76003</id>
    </interactant>
    <interactant intactId="EBI-739863">
        <id>Q9BQ66</id>
        <label>KRTAP4-12</label>
    </interactant>
    <organismsDiffer>false</organismsDiffer>
    <experiments>7</experiments>
</comment>
<comment type="interaction">
    <interactant intactId="EBI-374781">
        <id>O76003</id>
    </interactant>
    <interactant intactId="EBI-10172511">
        <id>Q9BYR5</id>
        <label>KRTAP4-2</label>
    </interactant>
    <organismsDiffer>false</organismsDiffer>
    <experiments>3</experiments>
</comment>
<comment type="interaction">
    <interactant intactId="EBI-374781">
        <id>O76003</id>
    </interactant>
    <interactant intactId="EBI-11958132">
        <id>Q9BYR3</id>
        <label>KRTAP4-4</label>
    </interactant>
    <organismsDiffer>false</organismsDiffer>
    <experiments>3</experiments>
</comment>
<comment type="interaction">
    <interactant intactId="EBI-374781">
        <id>O76003</id>
    </interactant>
    <interactant intactId="EBI-11993254">
        <id>Q9BYR2</id>
        <label>KRTAP4-5</label>
    </interactant>
    <organismsDiffer>false</organismsDiffer>
    <experiments>5</experiments>
</comment>
<comment type="interaction">
    <interactant intactId="EBI-374781">
        <id>O76003</id>
    </interactant>
    <interactant intactId="EBI-10302547">
        <id>Q9BYR0</id>
        <label>KRTAP4-7</label>
    </interactant>
    <organismsDiffer>false</organismsDiffer>
    <experiments>3</experiments>
</comment>
<comment type="interaction">
    <interactant intactId="EBI-374781">
        <id>O76003</id>
    </interactant>
    <interactant intactId="EBI-11993296">
        <id>Q6L8G4</id>
        <label>KRTAP5-11</label>
    </interactant>
    <organismsDiffer>false</organismsDiffer>
    <experiments>3</experiments>
</comment>
<comment type="interaction">
    <interactant intactId="EBI-374781">
        <id>O76003</id>
    </interactant>
    <interactant intactId="EBI-11974251">
        <id>Q6L8H2</id>
        <label>KRTAP5-3</label>
    </interactant>
    <organismsDiffer>false</organismsDiffer>
    <experiments>7</experiments>
</comment>
<comment type="interaction">
    <interactant intactId="EBI-374781">
        <id>O76003</id>
    </interactant>
    <interactant intactId="EBI-11963072">
        <id>Q6L8H1</id>
        <label>KRTAP5-4</label>
    </interactant>
    <organismsDiffer>false</organismsDiffer>
    <experiments>3</experiments>
</comment>
<comment type="interaction">
    <interactant intactId="EBI-374781">
        <id>O76003</id>
    </interactant>
    <interactant intactId="EBI-10250562">
        <id>Q6L8G9</id>
        <label>KRTAP5-6</label>
    </interactant>
    <organismsDiffer>false</organismsDiffer>
    <experiments>7</experiments>
</comment>
<comment type="interaction">
    <interactant intactId="EBI-374781">
        <id>O76003</id>
    </interactant>
    <interactant intactId="EBI-3958099">
        <id>P26371</id>
        <label>KRTAP5-9</label>
    </interactant>
    <organismsDiffer>false</organismsDiffer>
    <experiments>8</experiments>
</comment>
<comment type="interaction">
    <interactant intactId="EBI-374781">
        <id>O76003</id>
    </interactant>
    <interactant intactId="EBI-1044640">
        <id>Q9BYQ4</id>
        <label>KRTAP9-2</label>
    </interactant>
    <organismsDiffer>false</organismsDiffer>
    <experiments>8</experiments>
</comment>
<comment type="interaction">
    <interactant intactId="EBI-374781">
        <id>O76003</id>
    </interactant>
    <interactant intactId="EBI-1043191">
        <id>Q9BYQ3</id>
        <label>KRTAP9-3</label>
    </interactant>
    <organismsDiffer>false</organismsDiffer>
    <experiments>3</experiments>
</comment>
<comment type="interaction">
    <interactant intactId="EBI-374781">
        <id>O76003</id>
    </interactant>
    <interactant intactId="EBI-11958364">
        <id>Q9BYQ0</id>
        <label>KRTAP9-8</label>
    </interactant>
    <organismsDiffer>false</organismsDiffer>
    <experiments>3</experiments>
</comment>
<comment type="interaction">
    <interactant intactId="EBI-374781">
        <id>O76003</id>
    </interactant>
    <interactant intactId="EBI-10246750">
        <id>Q5TA82</id>
        <label>LCE2D</label>
    </interactant>
    <organismsDiffer>false</organismsDiffer>
    <experiments>6</experiments>
</comment>
<comment type="interaction">
    <interactant intactId="EBI-374781">
        <id>O76003</id>
    </interactant>
    <interactant intactId="EBI-739832">
        <id>Q8TBB1</id>
        <label>LNX1</label>
    </interactant>
    <organismsDiffer>false</organismsDiffer>
    <experiments>3</experiments>
</comment>
<comment type="interaction">
    <interactant intactId="EBI-374781">
        <id>O76003</id>
    </interactant>
    <interactant intactId="EBI-947402">
        <id>O60336</id>
        <label>MAPKBP1</label>
    </interactant>
    <organismsDiffer>false</organismsDiffer>
    <experiments>6</experiments>
</comment>
<comment type="interaction">
    <interactant intactId="EBI-374781">
        <id>O76003</id>
    </interactant>
    <interactant intactId="EBI-1051435">
        <id>P53582</id>
        <label>METAP1</label>
    </interactant>
    <organismsDiffer>false</organismsDiffer>
    <experiments>3</experiments>
</comment>
<comment type="interaction">
    <interactant intactId="EBI-374781">
        <id>O76003</id>
    </interactant>
    <interactant intactId="EBI-7134667">
        <id>Q6UVY6</id>
        <label>MOXD1</label>
    </interactant>
    <organismsDiffer>false</organismsDiffer>
    <experiments>7</experiments>
</comment>
<comment type="interaction">
    <interactant intactId="EBI-374781">
        <id>O76003</id>
    </interactant>
    <interactant intactId="EBI-10249760">
        <id>Q9UHB4</id>
        <label>NDOR1</label>
    </interactant>
    <organismsDiffer>false</organismsDiffer>
    <experiments>2</experiments>
</comment>
<comment type="interaction">
    <interactant intactId="EBI-374781">
        <id>O76003</id>
    </interactant>
    <interactant intactId="EBI-945833">
        <id>Q7Z3S9</id>
        <label>NOTCH2NLA</label>
    </interactant>
    <organismsDiffer>false</organismsDiffer>
    <experiments>3</experiments>
</comment>
<comment type="interaction">
    <interactant intactId="EBI-374781">
        <id>O76003</id>
    </interactant>
    <interactant intactId="EBI-3907456">
        <id>P34130</id>
        <label>NTF4</label>
    </interactant>
    <organismsDiffer>false</organismsDiffer>
    <experiments>3</experiments>
</comment>
<comment type="interaction">
    <interactant intactId="EBI-374781">
        <id>O76003</id>
    </interactant>
    <interactant intactId="EBI-10292253">
        <id>Q96PB7</id>
        <label>OLFM3</label>
    </interactant>
    <organismsDiffer>false</organismsDiffer>
    <experiments>3</experiments>
</comment>
<comment type="interaction">
    <interactant intactId="EBI-374781">
        <id>O76003</id>
    </interactant>
    <interactant intactId="EBI-751290">
        <id>Q92824</id>
        <label>PCSK5</label>
    </interactant>
    <organismsDiffer>false</organismsDiffer>
    <experiments>3</experiments>
</comment>
<comment type="interaction">
    <interactant intactId="EBI-374781">
        <id>O76003</id>
    </interactant>
    <interactant intactId="EBI-357275">
        <id>Q99471</id>
        <label>PFDN5</label>
    </interactant>
    <organismsDiffer>false</organismsDiffer>
    <experiments>3</experiments>
</comment>
<comment type="interaction">
    <interactant intactId="EBI-374781">
        <id>O76003</id>
    </interactant>
    <interactant intactId="EBI-740019">
        <id>O15162</id>
        <label>PLSCR1</label>
    </interactant>
    <organismsDiffer>false</organismsDiffer>
    <experiments>4</experiments>
</comment>
<comment type="interaction">
    <interactant intactId="EBI-374781">
        <id>O76003</id>
    </interactant>
    <interactant intactId="EBI-374762">
        <id>Q04759</id>
        <label>PRKCQ</label>
    </interactant>
    <organismsDiffer>false</organismsDiffer>
    <experiments>5</experiments>
</comment>
<comment type="interaction">
    <interactant intactId="EBI-374781">
        <id>O76003</id>
    </interactant>
    <interactant intactId="EBI-1504830">
        <id>Q9P2K3-2</id>
        <label>RCOR3</label>
    </interactant>
    <organismsDiffer>false</organismsDiffer>
    <experiments>3</experiments>
</comment>
<comment type="interaction">
    <interactant intactId="EBI-374781">
        <id>O76003</id>
    </interactant>
    <interactant intactId="EBI-10253121">
        <id>Q6P9E2</id>
        <label>RECK</label>
    </interactant>
    <organismsDiffer>false</organismsDiffer>
    <experiments>3</experiments>
</comment>
<comment type="interaction">
    <interactant intactId="EBI-374781">
        <id>O76003</id>
    </interactant>
    <interactant intactId="EBI-1052678">
        <id>O76081</id>
        <label>RGS20</label>
    </interactant>
    <organismsDiffer>false</organismsDiffer>
    <experiments>6</experiments>
</comment>
<comment type="interaction">
    <interactant intactId="EBI-374781">
        <id>O76003</id>
    </interactant>
    <interactant intactId="EBI-10178530">
        <id>O76081-6</id>
        <label>RGS20</label>
    </interactant>
    <organismsDiffer>false</organismsDiffer>
    <experiments>3</experiments>
</comment>
<comment type="interaction">
    <interactant intactId="EBI-374781">
        <id>O76003</id>
    </interactant>
    <interactant intactId="EBI-355653">
        <id>Q92922</id>
        <label>SMARCC1</label>
    </interactant>
    <organismsDiffer>false</organismsDiffer>
    <experiments>3</experiments>
</comment>
<comment type="interaction">
    <interactant intactId="EBI-374781">
        <id>O76003</id>
    </interactant>
    <interactant intactId="EBI-7239117">
        <id>Q9BT81</id>
        <label>SOX7</label>
    </interactant>
    <organismsDiffer>false</organismsDiffer>
    <experiments>3</experiments>
</comment>
<comment type="interaction">
    <interactant intactId="EBI-374781">
        <id>O76003</id>
    </interactant>
    <interactant intactId="EBI-358174">
        <id>O95793</id>
        <label>STAU1</label>
    </interactant>
    <organismsDiffer>false</organismsDiffer>
    <experiments>3</experiments>
</comment>
<comment type="interaction">
    <interactant intactId="EBI-374781">
        <id>O76003</id>
    </interactant>
    <interactant intactId="EBI-12140683">
        <id>Q9BX79-6</id>
        <label>STRA6</label>
    </interactant>
    <organismsDiffer>false</organismsDiffer>
    <experiments>3</experiments>
</comment>
<comment type="interaction">
    <interactant intactId="EBI-374781">
        <id>O76003</id>
    </interactant>
    <interactant intactId="EBI-533224">
        <id>P15884</id>
        <label>TCF4</label>
    </interactant>
    <organismsDiffer>false</organismsDiffer>
    <experiments>3</experiments>
</comment>
<comment type="interaction">
    <interactant intactId="EBI-374781">
        <id>O76003</id>
    </interactant>
    <interactant intactId="EBI-727338">
        <id>O95988</id>
        <label>TCL1B</label>
    </interactant>
    <organismsDiffer>false</organismsDiffer>
    <experiments>5</experiments>
</comment>
<comment type="interaction">
    <interactant intactId="EBI-374781">
        <id>O76003</id>
    </interactant>
    <interactant intactId="EBI-10260688">
        <id>Q86YD3</id>
        <label>TMEM25</label>
    </interactant>
    <organismsDiffer>false</organismsDiffer>
    <experiments>4</experiments>
</comment>
<comment type="interaction">
    <interactant intactId="EBI-374781">
        <id>O76003</id>
    </interactant>
    <interactant intactId="EBI-359224">
        <id>Q13077</id>
        <label>TRAF1</label>
    </interactant>
    <organismsDiffer>false</organismsDiffer>
    <experiments>5</experiments>
</comment>
<comment type="interaction">
    <interactant intactId="EBI-374781">
        <id>O76003</id>
    </interactant>
    <interactant intactId="EBI-2341518">
        <id>Q9NQ86</id>
        <label>TRIM36</label>
    </interactant>
    <organismsDiffer>false</organismsDiffer>
    <experiments>6</experiments>
</comment>
<comment type="interaction">
    <interactant intactId="EBI-374781">
        <id>O76003</id>
    </interactant>
    <interactant intactId="EBI-5235829">
        <id>Q8IWZ5</id>
        <label>TRIM42</label>
    </interactant>
    <organismsDiffer>false</organismsDiffer>
    <experiments>6</experiments>
</comment>
<comment type="interaction">
    <interactant intactId="EBI-374781">
        <id>O76003</id>
    </interactant>
    <interactant intactId="EBI-743729">
        <id>Q16851</id>
        <label>UGP2</label>
    </interactant>
    <organismsDiffer>false</organismsDiffer>
    <experiments>3</experiments>
</comment>
<comment type="interaction">
    <interactant intactId="EBI-374781">
        <id>O76003</id>
    </interactant>
    <interactant intactId="EBI-5658292">
        <id>Q8NCP5</id>
        <label>ZBTB44</label>
    </interactant>
    <organismsDiffer>false</organismsDiffer>
    <experiments>3</experiments>
</comment>
<comment type="interaction">
    <interactant intactId="EBI-374781">
        <id>O76003</id>
    </interactant>
    <interactant intactId="EBI-2555767">
        <id>Q15973</id>
        <label>ZNF124</label>
    </interactant>
    <organismsDiffer>false</organismsDiffer>
    <experiments>3</experiments>
</comment>
<comment type="interaction">
    <interactant intactId="EBI-374781">
        <id>O76003</id>
    </interactant>
    <interactant intactId="EBI-2688184">
        <id>Q9UQR1</id>
        <label>ZNF148</label>
    </interactant>
    <organismsDiffer>false</organismsDiffer>
    <experiments>3</experiments>
</comment>
<comment type="interaction">
    <interactant intactId="EBI-374781">
        <id>O76003</id>
    </interactant>
    <interactant intactId="EBI-11741890">
        <id>Q86VK4-3</id>
        <label>ZNF410</label>
    </interactant>
    <organismsDiffer>false</organismsDiffer>
    <experiments>3</experiments>
</comment>
<comment type="interaction">
    <interactant intactId="EBI-374781">
        <id>O76003</id>
    </interactant>
    <interactant intactId="EBI-743265">
        <id>Q9BUY5</id>
        <label>ZNF426</label>
    </interactant>
    <organismsDiffer>false</organismsDiffer>
    <experiments>3</experiments>
</comment>
<comment type="interaction">
    <interactant intactId="EBI-374781">
        <id>O76003</id>
    </interactant>
    <interactant intactId="EBI-1105370">
        <id>Q9ULM2</id>
        <label>ZNF490</label>
    </interactant>
    <organismsDiffer>false</organismsDiffer>
    <experiments>3</experiments>
</comment>
<comment type="interaction">
    <interactant intactId="EBI-374781">
        <id>O76003</id>
    </interactant>
    <interactant intactId="EBI-2841978">
        <id>Q6NX49</id>
        <label>ZNF544</label>
    </interactant>
    <organismsDiffer>false</organismsDiffer>
    <experiments>3</experiments>
</comment>
<comment type="interaction">
    <interactant intactId="EBI-374781">
        <id>O76003</id>
    </interactant>
    <interactant intactId="EBI-10251462">
        <id>Q6NX45</id>
        <label>ZNF774</label>
    </interactant>
    <organismsDiffer>false</organismsDiffer>
    <experiments>3</experiments>
</comment>
<comment type="subcellular location">
    <subcellularLocation>
        <location evidence="16">Cytoplasm</location>
        <location evidence="16">Cytosol</location>
    </subcellularLocation>
    <subcellularLocation>
        <location evidence="4">Cytoplasm</location>
        <location evidence="4">Cell cortex</location>
    </subcellularLocation>
    <subcellularLocation>
        <location evidence="1">Cytoplasm</location>
        <location evidence="1">Myofibril</location>
        <location evidence="1">Sarcomere</location>
        <location evidence="1">Z line</location>
    </subcellularLocation>
    <text evidence="1">Under the plasma membrane (By similarity). After PMA stimulation, GLRX3 and PRKCQ/PKC-theta translocate to a more extended submembrane area (By similarity). In the Z line, found associated with CSRP3 (By similarity).</text>
</comment>
<comment type="tissue specificity">
    <text>Expressed in heart, spleen, testis and, to a lower extent, in thymus and peripheral blood leukocytes. Weakly expressed in lung, placenta, colon and small intestine.</text>
</comment>
<comment type="domain">
    <text evidence="13">The thioredoxin domain lacks the two redox-active cysteines. This strongly suggests that it lacks thioredoxin activity.</text>
</comment>
<comment type="miscellaneous">
    <text evidence="15">Silencing of Grx3 in HeLa cells decreases the activities of several cytosolic Fe/S proteins, such as ACO1, a major component of post-transcriptional iron regulation. As a consequence, Grx3-depleted cells show decreased levels of ferritin and increased levels of transferrin receptor, features characteristic of cellular iron starvation (PubMed:23615448).</text>
</comment>